<sequence length="292" mass="31270">MFTGSIVAIVTPMDEKGNVCRASLKKLIDYHVASGTSAIVSVGTTGESATLNHDEHADVVMMTLDLADGRIPVIAGTGANATAEAISLTQRFNDSGIVGCLTVTPYYNRPSQEGLYQHFKAIAEHTDLPQILYNVPSRTGCDLLPETVGRLAKVKNIIGIKEATGNLTRVNQIKELVSDDFVLLSGDDASALDFMQLGGHGVISVTANVAARDMAQMCKLAAEGHFAEARVINQRLMPLHNKLFVEPNPIPVKWACKELGLVATDTLRLPMTPITDSGRETVRAALKHAGLL</sequence>
<gene>
    <name evidence="1" type="primary">dapA</name>
    <name type="ordered locus">SF2521</name>
    <name type="ordered locus">S2671</name>
</gene>
<evidence type="ECO:0000255" key="1">
    <source>
        <dbReference type="HAMAP-Rule" id="MF_00418"/>
    </source>
</evidence>
<evidence type="ECO:0000305" key="2"/>
<reference key="1">
    <citation type="journal article" date="2002" name="Nucleic Acids Res.">
        <title>Genome sequence of Shigella flexneri 2a: insights into pathogenicity through comparison with genomes of Escherichia coli K12 and O157.</title>
        <authorList>
            <person name="Jin Q."/>
            <person name="Yuan Z."/>
            <person name="Xu J."/>
            <person name="Wang Y."/>
            <person name="Shen Y."/>
            <person name="Lu W."/>
            <person name="Wang J."/>
            <person name="Liu H."/>
            <person name="Yang J."/>
            <person name="Yang F."/>
            <person name="Zhang X."/>
            <person name="Zhang J."/>
            <person name="Yang G."/>
            <person name="Wu H."/>
            <person name="Qu D."/>
            <person name="Dong J."/>
            <person name="Sun L."/>
            <person name="Xue Y."/>
            <person name="Zhao A."/>
            <person name="Gao Y."/>
            <person name="Zhu J."/>
            <person name="Kan B."/>
            <person name="Ding K."/>
            <person name="Chen S."/>
            <person name="Cheng H."/>
            <person name="Yao Z."/>
            <person name="He B."/>
            <person name="Chen R."/>
            <person name="Ma D."/>
            <person name="Qiang B."/>
            <person name="Wen Y."/>
            <person name="Hou Y."/>
            <person name="Yu J."/>
        </authorList>
    </citation>
    <scope>NUCLEOTIDE SEQUENCE [LARGE SCALE GENOMIC DNA]</scope>
    <source>
        <strain>301 / Serotype 2a</strain>
    </source>
</reference>
<reference key="2">
    <citation type="journal article" date="2003" name="Infect. Immun.">
        <title>Complete genome sequence and comparative genomics of Shigella flexneri serotype 2a strain 2457T.</title>
        <authorList>
            <person name="Wei J."/>
            <person name="Goldberg M.B."/>
            <person name="Burland V."/>
            <person name="Venkatesan M.M."/>
            <person name="Deng W."/>
            <person name="Fournier G."/>
            <person name="Mayhew G.F."/>
            <person name="Plunkett G. III"/>
            <person name="Rose D.J."/>
            <person name="Darling A."/>
            <person name="Mau B."/>
            <person name="Perna N.T."/>
            <person name="Payne S.M."/>
            <person name="Runyen-Janecky L.J."/>
            <person name="Zhou S."/>
            <person name="Schwartz D.C."/>
            <person name="Blattner F.R."/>
        </authorList>
    </citation>
    <scope>NUCLEOTIDE SEQUENCE [LARGE SCALE GENOMIC DNA]</scope>
    <source>
        <strain>ATCC 700930 / 2457T / Serotype 2a</strain>
    </source>
</reference>
<organism>
    <name type="scientific">Shigella flexneri</name>
    <dbReference type="NCBI Taxonomy" id="623"/>
    <lineage>
        <taxon>Bacteria</taxon>
        <taxon>Pseudomonadati</taxon>
        <taxon>Pseudomonadota</taxon>
        <taxon>Gammaproteobacteria</taxon>
        <taxon>Enterobacterales</taxon>
        <taxon>Enterobacteriaceae</taxon>
        <taxon>Shigella</taxon>
    </lineage>
</organism>
<proteinExistence type="inferred from homology"/>
<keyword id="KW-0028">Amino-acid biosynthesis</keyword>
<keyword id="KW-0963">Cytoplasm</keyword>
<keyword id="KW-0220">Diaminopimelate biosynthesis</keyword>
<keyword id="KW-0456">Lyase</keyword>
<keyword id="KW-0457">Lysine biosynthesis</keyword>
<keyword id="KW-1185">Reference proteome</keyword>
<keyword id="KW-0704">Schiff base</keyword>
<protein>
    <recommendedName>
        <fullName evidence="1">4-hydroxy-tetrahydrodipicolinate synthase</fullName>
        <shortName evidence="1">HTPA synthase</shortName>
        <ecNumber evidence="1">4.3.3.7</ecNumber>
    </recommendedName>
</protein>
<accession>P0A6L3</accession>
<accession>P05640</accession>
<accession>P78223</accession>
<feature type="chain" id="PRO_0000103152" description="4-hydroxy-tetrahydrodipicolinate synthase">
    <location>
        <begin position="1"/>
        <end position="292"/>
    </location>
</feature>
<feature type="active site" description="Proton donor/acceptor" evidence="1">
    <location>
        <position position="133"/>
    </location>
</feature>
<feature type="active site" description="Schiff-base intermediate with substrate" evidence="1">
    <location>
        <position position="161"/>
    </location>
</feature>
<feature type="binding site" evidence="1">
    <location>
        <position position="45"/>
    </location>
    <ligand>
        <name>pyruvate</name>
        <dbReference type="ChEBI" id="CHEBI:15361"/>
    </ligand>
</feature>
<feature type="binding site" evidence="1">
    <location>
        <position position="203"/>
    </location>
    <ligand>
        <name>pyruvate</name>
        <dbReference type="ChEBI" id="CHEBI:15361"/>
    </ligand>
</feature>
<feature type="site" description="Part of a proton relay during catalysis" evidence="1">
    <location>
        <position position="44"/>
    </location>
</feature>
<feature type="site" description="Part of a proton relay during catalysis" evidence="1">
    <location>
        <position position="107"/>
    </location>
</feature>
<name>DAPA_SHIFL</name>
<comment type="function">
    <text evidence="1">Catalyzes the condensation of (S)-aspartate-beta-semialdehyde [(S)-ASA] and pyruvate to 4-hydroxy-tetrahydrodipicolinate (HTPA).</text>
</comment>
<comment type="catalytic activity">
    <reaction evidence="1">
        <text>L-aspartate 4-semialdehyde + pyruvate = (2S,4S)-4-hydroxy-2,3,4,5-tetrahydrodipicolinate + H2O + H(+)</text>
        <dbReference type="Rhea" id="RHEA:34171"/>
        <dbReference type="ChEBI" id="CHEBI:15361"/>
        <dbReference type="ChEBI" id="CHEBI:15377"/>
        <dbReference type="ChEBI" id="CHEBI:15378"/>
        <dbReference type="ChEBI" id="CHEBI:67139"/>
        <dbReference type="ChEBI" id="CHEBI:537519"/>
        <dbReference type="EC" id="4.3.3.7"/>
    </reaction>
</comment>
<comment type="pathway">
    <text evidence="1">Amino-acid biosynthesis; L-lysine biosynthesis via DAP pathway; (S)-tetrahydrodipicolinate from L-aspartate: step 3/4.</text>
</comment>
<comment type="subunit">
    <text evidence="1">Homotetramer; dimer of dimers.</text>
</comment>
<comment type="subcellular location">
    <subcellularLocation>
        <location evidence="1">Cytoplasm</location>
    </subcellularLocation>
</comment>
<comment type="similarity">
    <text evidence="1">Belongs to the DapA family.</text>
</comment>
<comment type="caution">
    <text evidence="2">Was originally thought to be a dihydrodipicolinate synthase (DHDPS), catalyzing the condensation of (S)-aspartate-beta-semialdehyde [(S)-ASA] and pyruvate to dihydrodipicolinate (DHDP). However, it was shown in E.coli that the product of the enzymatic reaction is not dihydrodipicolinate but in fact (4S)-4-hydroxy-2,3,4,5-tetrahydro-(2S)-dipicolinic acid (HTPA), and that the consecutive dehydration reaction leading to DHDP is not spontaneous but catalyzed by DapB.</text>
</comment>
<dbReference type="EC" id="4.3.3.7" evidence="1"/>
<dbReference type="EMBL" id="AE005674">
    <property type="protein sequence ID" value="AAN44024.2"/>
    <property type="molecule type" value="Genomic_DNA"/>
</dbReference>
<dbReference type="EMBL" id="AE014073">
    <property type="protein sequence ID" value="AAP17838.1"/>
    <property type="molecule type" value="Genomic_DNA"/>
</dbReference>
<dbReference type="RefSeq" id="NP_708317.2">
    <property type="nucleotide sequence ID" value="NC_004337.2"/>
</dbReference>
<dbReference type="RefSeq" id="WP_001311023.1">
    <property type="nucleotide sequence ID" value="NZ_WPGW01000011.1"/>
</dbReference>
<dbReference type="SMR" id="P0A6L3"/>
<dbReference type="STRING" id="198214.SF2521"/>
<dbReference type="PaxDb" id="198214-SF2521"/>
<dbReference type="GeneID" id="1025451"/>
<dbReference type="KEGG" id="sfl:SF2521"/>
<dbReference type="KEGG" id="sfx:S2671"/>
<dbReference type="PATRIC" id="fig|198214.7.peg.3014"/>
<dbReference type="HOGENOM" id="CLU_049343_7_1_6"/>
<dbReference type="UniPathway" id="UPA00034">
    <property type="reaction ID" value="UER00017"/>
</dbReference>
<dbReference type="Proteomes" id="UP000001006">
    <property type="component" value="Chromosome"/>
</dbReference>
<dbReference type="Proteomes" id="UP000002673">
    <property type="component" value="Chromosome"/>
</dbReference>
<dbReference type="GO" id="GO:0005829">
    <property type="term" value="C:cytosol"/>
    <property type="evidence" value="ECO:0007669"/>
    <property type="project" value="TreeGrafter"/>
</dbReference>
<dbReference type="GO" id="GO:0008840">
    <property type="term" value="F:4-hydroxy-tetrahydrodipicolinate synthase activity"/>
    <property type="evidence" value="ECO:0007669"/>
    <property type="project" value="UniProtKB-UniRule"/>
</dbReference>
<dbReference type="GO" id="GO:0019877">
    <property type="term" value="P:diaminopimelate biosynthetic process"/>
    <property type="evidence" value="ECO:0007669"/>
    <property type="project" value="UniProtKB-UniRule"/>
</dbReference>
<dbReference type="GO" id="GO:0009089">
    <property type="term" value="P:lysine biosynthetic process via diaminopimelate"/>
    <property type="evidence" value="ECO:0007669"/>
    <property type="project" value="UniProtKB-UniRule"/>
</dbReference>
<dbReference type="CDD" id="cd00950">
    <property type="entry name" value="DHDPS"/>
    <property type="match status" value="1"/>
</dbReference>
<dbReference type="FunFam" id="3.20.20.70:FF:000046">
    <property type="entry name" value="4-hydroxy-tetrahydrodipicolinate synthase"/>
    <property type="match status" value="1"/>
</dbReference>
<dbReference type="Gene3D" id="3.20.20.70">
    <property type="entry name" value="Aldolase class I"/>
    <property type="match status" value="1"/>
</dbReference>
<dbReference type="HAMAP" id="MF_00418">
    <property type="entry name" value="DapA"/>
    <property type="match status" value="1"/>
</dbReference>
<dbReference type="InterPro" id="IPR013785">
    <property type="entry name" value="Aldolase_TIM"/>
</dbReference>
<dbReference type="InterPro" id="IPR005263">
    <property type="entry name" value="DapA"/>
</dbReference>
<dbReference type="InterPro" id="IPR002220">
    <property type="entry name" value="DapA-like"/>
</dbReference>
<dbReference type="InterPro" id="IPR020625">
    <property type="entry name" value="Schiff_base-form_aldolases_AS"/>
</dbReference>
<dbReference type="InterPro" id="IPR020624">
    <property type="entry name" value="Schiff_base-form_aldolases_CS"/>
</dbReference>
<dbReference type="NCBIfam" id="TIGR00674">
    <property type="entry name" value="dapA"/>
    <property type="match status" value="1"/>
</dbReference>
<dbReference type="PANTHER" id="PTHR12128:SF66">
    <property type="entry name" value="4-HYDROXY-2-OXOGLUTARATE ALDOLASE, MITOCHONDRIAL"/>
    <property type="match status" value="1"/>
</dbReference>
<dbReference type="PANTHER" id="PTHR12128">
    <property type="entry name" value="DIHYDRODIPICOLINATE SYNTHASE"/>
    <property type="match status" value="1"/>
</dbReference>
<dbReference type="Pfam" id="PF00701">
    <property type="entry name" value="DHDPS"/>
    <property type="match status" value="1"/>
</dbReference>
<dbReference type="PIRSF" id="PIRSF001365">
    <property type="entry name" value="DHDPS"/>
    <property type="match status" value="1"/>
</dbReference>
<dbReference type="PRINTS" id="PR00146">
    <property type="entry name" value="DHPICSNTHASE"/>
</dbReference>
<dbReference type="SMART" id="SM01130">
    <property type="entry name" value="DHDPS"/>
    <property type="match status" value="1"/>
</dbReference>
<dbReference type="SUPFAM" id="SSF51569">
    <property type="entry name" value="Aldolase"/>
    <property type="match status" value="1"/>
</dbReference>
<dbReference type="PROSITE" id="PS00665">
    <property type="entry name" value="DHDPS_1"/>
    <property type="match status" value="1"/>
</dbReference>
<dbReference type="PROSITE" id="PS00666">
    <property type="entry name" value="DHDPS_2"/>
    <property type="match status" value="1"/>
</dbReference>